<comment type="similarity">
    <text evidence="2">Belongs to the epstein-barr virus LF3 family.</text>
</comment>
<protein>
    <recommendedName>
        <fullName>Uncharacterized protein LF3</fullName>
    </recommendedName>
</protein>
<feature type="chain" id="PRO_0000382454" description="Uncharacterized protein LF3">
    <location>
        <begin position="1"/>
        <end position="924"/>
    </location>
</feature>
<feature type="region of interest" description="Disordered" evidence="1">
    <location>
        <begin position="1"/>
        <end position="862"/>
    </location>
</feature>
<reference key="1">
    <citation type="journal article" date="2005" name="J. Virol.">
        <title>Genomic sequence analysis of Epstein-Barr virus strain GD1 from a nasopharyngeal carcinoma patient.</title>
        <authorList>
            <person name="Zeng M.-S."/>
            <person name="Li D.-J."/>
            <person name="Liu Q.-L."/>
            <person name="Song L.-B."/>
            <person name="Li M.-Z."/>
            <person name="Zhang R.-H."/>
            <person name="Yu X.-J."/>
            <person name="Wang H.-M."/>
            <person name="Ernberg I."/>
            <person name="Zeng Y.-X."/>
        </authorList>
    </citation>
    <scope>NUCLEOTIDE SEQUENCE [LARGE SCALE GENOMIC DNA]</scope>
</reference>
<accession>P0C728</accession>
<accession>Q99307</accession>
<name>LF3_EBVG</name>
<organism>
    <name type="scientific">Epstein-Barr virus (strain GD1)</name>
    <name type="common">HHV-4</name>
    <name type="synonym">Human gammaherpesvirus 4</name>
    <dbReference type="NCBI Taxonomy" id="10376"/>
    <lineage>
        <taxon>Viruses</taxon>
        <taxon>Duplodnaviria</taxon>
        <taxon>Heunggongvirae</taxon>
        <taxon>Peploviricota</taxon>
        <taxon>Herviviricetes</taxon>
        <taxon>Herpesvirales</taxon>
        <taxon>Orthoherpesviridae</taxon>
        <taxon>Gammaherpesvirinae</taxon>
        <taxon>Lymphocryptovirus</taxon>
        <taxon>Lymphocryptovirus humangamma4</taxon>
    </lineage>
</organism>
<sequence>MKRVARGPCLAPGSGLGAHPHPRRSGAADPADPVGHPAAPRAPGPEPRTRLQPATPRRSGAADPADPVGHPAAPRAPGPEPRTRLQPATPRRSGAADPADPVGHPAAPRAPGPEPRTRLQPATPRRSGAADPADPVGHPAAPRAPGPEPRTRLQPATPRRSGAADPADPVGHPAAPRAPGPEPRTRLQPATPRRSGAADPADPVGHPAAPRAPGPEPRTRLQPATPRRSGAADPADPVGHPAAPRAPGPEPRTRLQPATPRRSGAADPADPVGHPAAPRAPGPEPRTRLQPATPRRSGAADPADPVGHPAAPRAPGPEPRTRLQPATPRRSGAADPADPVGHPAAPRAPGPEPRTRLQPATPRRSGAADPADPVGHPAAPRAPGPEPRTRLQPATPRRSGAADPADPVGHPAAPRAPGPEPRTRLQPATPRRSGAADPADPVGHPAAPRAPGPEPRTRLQPATPRRSGAADPADPVGHPAAPRAPGPEPRTRLQPATPRRSGAADPADPVGHPAAPRAPGPEPRTRLQPATPRRSGAADPADPVGHPAAPRAPGPEPRTRLQPATPRRSGAADPADPVGHPAAPRAPGPEPRTRLQPATPRRSGAADPADPVGHPAAPRAPGPEPRTRLQPATPRRSGAADPADPVGHPAAPRAPGPEPRTRLQPATPRRSGAADPADPVGHPAAPRAPGPEPRTRLQPATPRRSGAADPADPVGHPAAPRAPGPEPRTRLQPATPRRSGAADPADPVGHPAAPRAPGPEPRTRLQPATPRRSGAADPADPVGHPAAPRAPGPEPRTRLQPATPRRSGAADPADPVGHPAAPRAPGPEPRTRLQPATPRRSGAADPADPVGHPAAPELQGWVLRPKGTGGDFRGIGVTINWLNLHHVYVVFHAAYRLEGQVVIGSEILETRVPLKQGALLPLLF</sequence>
<proteinExistence type="inferred from homology"/>
<evidence type="ECO:0000256" key="1">
    <source>
        <dbReference type="SAM" id="MobiDB-lite"/>
    </source>
</evidence>
<evidence type="ECO:0000305" key="2"/>
<organismHost>
    <name type="scientific">Homo sapiens</name>
    <name type="common">Human</name>
    <dbReference type="NCBI Taxonomy" id="9606"/>
</organismHost>
<gene>
    <name type="primary">LF3</name>
</gene>
<dbReference type="EMBL" id="AY961628">
    <property type="protein sequence ID" value="ABA06393.1"/>
    <property type="molecule type" value="Genomic_DNA"/>
</dbReference>
<dbReference type="PIR" id="S27923">
    <property type="entry name" value="S27923"/>
</dbReference>
<dbReference type="RefSeq" id="YP_401707.1">
    <property type="nucleotide sequence ID" value="NC_007605.1"/>
</dbReference>
<dbReference type="GeneID" id="3783749"/>
<dbReference type="KEGG" id="vg:3783749"/>
<dbReference type="Proteomes" id="UP000007641">
    <property type="component" value="Genome"/>
</dbReference>